<name>D7S1_AEDAE</name>
<keyword id="KW-0002">3D-structure</keyword>
<keyword id="KW-1015">Disulfide bond</keyword>
<keyword id="KW-1185">Reference proteome</keyword>
<keyword id="KW-0964">Secreted</keyword>
<keyword id="KW-0732">Signal</keyword>
<reference evidence="6" key="1">
    <citation type="journal article" date="2002" name="Insect Biochem. Mol. Biol.">
        <title>Toward a description of the sialome of the adult female mosquito Aedes aegypti.</title>
        <authorList>
            <person name="Valenzuela J.G."/>
            <person name="Pham V.M."/>
            <person name="Garfield M.K."/>
            <person name="Francischetti I.M."/>
            <person name="Ribeiro J.M."/>
        </authorList>
    </citation>
    <scope>NUCLEOTIDE SEQUENCE [MRNA]</scope>
    <scope>TISSUE SPECIFICITY</scope>
    <source>
        <strain evidence="6">Liverpool</strain>
        <tissue evidence="6">Salivary gland</tissue>
    </source>
</reference>
<reference evidence="7" key="2">
    <citation type="submission" date="2005-03" db="EMBL/GenBank/DDBJ databases">
        <title>Complementing the sialome of the adult female Aedes aegypti mosquito.</title>
        <authorList>
            <person name="Chandra P.K."/>
            <person name="Wikel S.K."/>
        </authorList>
    </citation>
    <scope>NUCLEOTIDE SEQUENCE [MRNA]</scope>
    <source>
        <tissue evidence="7">Salivary gland</tissue>
    </source>
</reference>
<reference evidence="8" key="3">
    <citation type="submission" date="2017-06" db="EMBL/GenBank/DDBJ databases">
        <title>Aedes aegypti genome working group (AGWG) sequencing and assembly.</title>
        <authorList>
            <consortium name="Aedes aegypti Genome Working Group (AGWG)"/>
            <person name="Matthews B.J."/>
        </authorList>
    </citation>
    <scope>NUCLEOTIDE SEQUENCE [LARGE SCALE GENOMIC DNA]</scope>
    <source>
        <strain evidence="8">LVP_AGWG</strain>
    </source>
</reference>
<reference evidence="9" key="4">
    <citation type="journal article" date="2022" name="Insect Biochem. Mol. Biol.">
        <title>Functional aspects of evolution in a cluster of salivary protein genes from mosquitoes.</title>
        <authorList>
            <person name="Alvarenga P.H."/>
            <person name="Dias D.R."/>
            <person name="Xu X."/>
            <person name="Francischetti I.M.B."/>
            <person name="Gittis A.G."/>
            <person name="Arp G."/>
            <person name="Garboczi D.N."/>
            <person name="Ribeiro J.M.C."/>
            <person name="Andersen J.F."/>
        </authorList>
    </citation>
    <scope>X-RAY CRYSTALLOGRAPHY (1.19 ANGSTROMS) OF 22-148</scope>
    <scope>FUNCTION</scope>
    <scope>DISULFIDE BONDS</scope>
</reference>
<accession>Q8T9T4</accession>
<gene>
    <name evidence="4" type="primary">D7S1</name>
    <name evidence="4" type="synonym">AAEL006406</name>
    <name evidence="7" type="synonym">SG14.5sp</name>
</gene>
<feature type="signal peptide" evidence="1">
    <location>
        <begin position="1"/>
        <end position="21"/>
    </location>
</feature>
<feature type="chain" id="PRO_5010146918" description="Short form salivary protein D7S1" evidence="1">
    <location>
        <begin position="22"/>
        <end position="148"/>
    </location>
</feature>
<feature type="disulfide bond" evidence="3 9">
    <location>
        <begin position="28"/>
        <end position="61"/>
    </location>
</feature>
<feature type="disulfide bond" evidence="3 9">
    <location>
        <begin position="41"/>
        <end position="147"/>
    </location>
</feature>
<feature type="disulfide bond" evidence="3 9">
    <location>
        <begin position="103"/>
        <end position="119"/>
    </location>
</feature>
<feature type="helix" evidence="10">
    <location>
        <begin position="24"/>
        <end position="32"/>
    </location>
</feature>
<feature type="helix" evidence="10">
    <location>
        <begin position="37"/>
        <end position="44"/>
    </location>
</feature>
<feature type="helix" evidence="10">
    <location>
        <begin position="55"/>
        <end position="65"/>
    </location>
</feature>
<feature type="helix" evidence="10">
    <location>
        <begin position="71"/>
        <end position="73"/>
    </location>
</feature>
<feature type="helix" evidence="10">
    <location>
        <begin position="78"/>
        <end position="85"/>
    </location>
</feature>
<feature type="helix" evidence="10">
    <location>
        <begin position="86"/>
        <end position="88"/>
    </location>
</feature>
<feature type="helix" evidence="10">
    <location>
        <begin position="93"/>
        <end position="107"/>
    </location>
</feature>
<feature type="helix" evidence="10">
    <location>
        <begin position="108"/>
        <end position="110"/>
    </location>
</feature>
<feature type="helix" evidence="10">
    <location>
        <begin position="113"/>
        <end position="122"/>
    </location>
</feature>
<feature type="turn" evidence="10">
    <location>
        <begin position="124"/>
        <end position="126"/>
    </location>
</feature>
<feature type="helix" evidence="10">
    <location>
        <begin position="127"/>
        <end position="137"/>
    </location>
</feature>
<feature type="helix" evidence="10">
    <location>
        <begin position="139"/>
        <end position="142"/>
    </location>
</feature>
<sequence length="148" mass="16940">MKQNVFFLIAYFSLVFCMCNAVSHFKNCADKQLSDDKPLQCKIRNLQVDGNMPKVKEYMNCAFESSGWAKDGGKKLDTSKVAQDMVPYGFNIKTELDEVTKECETEFGAEISSIDYLACLLIDEKTKTQFKTMLMMKEADFFKQNLCN</sequence>
<proteinExistence type="evidence at protein level"/>
<evidence type="ECO:0000255" key="1"/>
<evidence type="ECO:0000269" key="2">
    <source>
    </source>
</evidence>
<evidence type="ECO:0000269" key="3">
    <source>
    </source>
</evidence>
<evidence type="ECO:0000303" key="4">
    <source>
    </source>
</evidence>
<evidence type="ECO:0000305" key="5"/>
<evidence type="ECO:0000312" key="6">
    <source>
        <dbReference type="EMBL" id="AAL76035.1"/>
    </source>
</evidence>
<evidence type="ECO:0000312" key="7">
    <source>
        <dbReference type="EMBL" id="AAX54868.1"/>
    </source>
</evidence>
<evidence type="ECO:0000312" key="8">
    <source>
        <dbReference type="Proteomes" id="UP000008820"/>
    </source>
</evidence>
<evidence type="ECO:0007744" key="9">
    <source>
        <dbReference type="PDB" id="7TVC"/>
    </source>
</evidence>
<evidence type="ECO:0007829" key="10">
    <source>
        <dbReference type="PDB" id="7TVC"/>
    </source>
</evidence>
<protein>
    <recommendedName>
        <fullName evidence="5">Short form salivary protein D7S1</fullName>
        <shortName evidence="4">AeD7S1</shortName>
    </recommendedName>
</protein>
<organism evidence="6">
    <name type="scientific">Aedes aegypti</name>
    <name type="common">Yellowfever mosquito</name>
    <name type="synonym">Culex aegypti</name>
    <dbReference type="NCBI Taxonomy" id="7159"/>
    <lineage>
        <taxon>Eukaryota</taxon>
        <taxon>Metazoa</taxon>
        <taxon>Ecdysozoa</taxon>
        <taxon>Arthropoda</taxon>
        <taxon>Hexapoda</taxon>
        <taxon>Insecta</taxon>
        <taxon>Pterygota</taxon>
        <taxon>Neoptera</taxon>
        <taxon>Endopterygota</taxon>
        <taxon>Diptera</taxon>
        <taxon>Nematocera</taxon>
        <taxon>Culicoidea</taxon>
        <taxon>Culicidae</taxon>
        <taxon>Culicinae</taxon>
        <taxon>Aedini</taxon>
        <taxon>Aedes</taxon>
        <taxon>Stegomyia</taxon>
    </lineage>
</organism>
<comment type="function">
    <text evidence="3">In contrast to the related D7 salivary proteins that can bind biogenic amines, does not bind serotonin.</text>
</comment>
<comment type="subcellular location">
    <subcellularLocation>
        <location evidence="5">Secreted</location>
    </subcellularLocation>
</comment>
<comment type="tissue specificity">
    <text evidence="2">Female salivary gland.</text>
</comment>
<comment type="similarity">
    <text evidence="5">Belongs to the PBP/GOBP family.</text>
</comment>
<dbReference type="EMBL" id="AF466612">
    <property type="protein sequence ID" value="AAL76035.1"/>
    <property type="molecule type" value="mRNA"/>
</dbReference>
<dbReference type="EMBL" id="AY951936">
    <property type="protein sequence ID" value="AAX54868.1"/>
    <property type="molecule type" value="mRNA"/>
</dbReference>
<dbReference type="PDB" id="7TVC">
    <property type="method" value="X-ray"/>
    <property type="resolution" value="1.19 A"/>
    <property type="chains" value="A/B=22-148"/>
</dbReference>
<dbReference type="PDBsum" id="7TVC"/>
<dbReference type="SMR" id="Q8T9T4"/>
<dbReference type="EnsemblMetazoa" id="AAEL006406-RG">
    <property type="protein sequence ID" value="AAEL006406-PG"/>
    <property type="gene ID" value="AAEL006406"/>
</dbReference>
<dbReference type="VEuPathDB" id="VectorBase:AAEL006406"/>
<dbReference type="InParanoid" id="Q8T9T4"/>
<dbReference type="OrthoDB" id="7765740at2759"/>
<dbReference type="Proteomes" id="UP000008820">
    <property type="component" value="Chromosome 2"/>
</dbReference>
<dbReference type="GO" id="GO:0005576">
    <property type="term" value="C:extracellular region"/>
    <property type="evidence" value="ECO:0007669"/>
    <property type="project" value="UniProtKB-SubCell"/>
</dbReference>
<dbReference type="GO" id="GO:0005549">
    <property type="term" value="F:odorant binding"/>
    <property type="evidence" value="ECO:0007669"/>
    <property type="project" value="InterPro"/>
</dbReference>
<dbReference type="Gene3D" id="1.10.238.20">
    <property type="entry name" value="Pheromone/general odorant binding protein domain"/>
    <property type="match status" value="1"/>
</dbReference>
<dbReference type="InterPro" id="IPR036728">
    <property type="entry name" value="PBP_GOBP_sf"/>
</dbReference>
<dbReference type="SUPFAM" id="SSF47565">
    <property type="entry name" value="Insect pheromone/odorant-binding proteins"/>
    <property type="match status" value="1"/>
</dbReference>